<dbReference type="EC" id="3.1.3.-" evidence="1"/>
<dbReference type="EMBL" id="AE009950">
    <property type="protein sequence ID" value="AAL81901.1"/>
    <property type="molecule type" value="Genomic_DNA"/>
</dbReference>
<dbReference type="RefSeq" id="WP_011012918.1">
    <property type="nucleotide sequence ID" value="NZ_CP023154.1"/>
</dbReference>
<dbReference type="SMR" id="Q8U040"/>
<dbReference type="STRING" id="186497.PF1777"/>
<dbReference type="PaxDb" id="186497-PF1777"/>
<dbReference type="KEGG" id="pfu:PF1777"/>
<dbReference type="PATRIC" id="fig|186497.12.peg.1848"/>
<dbReference type="eggNOG" id="arCOG02291">
    <property type="taxonomic scope" value="Archaea"/>
</dbReference>
<dbReference type="HOGENOM" id="CLU_045011_8_3_2"/>
<dbReference type="OrthoDB" id="27736at2157"/>
<dbReference type="PhylomeDB" id="Q8U040"/>
<dbReference type="Proteomes" id="UP000001013">
    <property type="component" value="Chromosome"/>
</dbReference>
<dbReference type="GO" id="GO:0046872">
    <property type="term" value="F:metal ion binding"/>
    <property type="evidence" value="ECO:0007669"/>
    <property type="project" value="UniProtKB-KW"/>
</dbReference>
<dbReference type="GO" id="GO:0016791">
    <property type="term" value="F:phosphatase activity"/>
    <property type="evidence" value="ECO:0007669"/>
    <property type="project" value="UniProtKB-ARBA"/>
</dbReference>
<dbReference type="GO" id="GO:0044283">
    <property type="term" value="P:small molecule biosynthetic process"/>
    <property type="evidence" value="ECO:0007669"/>
    <property type="project" value="UniProtKB-ARBA"/>
</dbReference>
<dbReference type="CDD" id="cd04305">
    <property type="entry name" value="HAD_Neu5Ac-Pase_like"/>
    <property type="match status" value="1"/>
</dbReference>
<dbReference type="Gene3D" id="1.10.150.520">
    <property type="match status" value="1"/>
</dbReference>
<dbReference type="Gene3D" id="3.40.50.1000">
    <property type="entry name" value="HAD superfamily/HAD-like"/>
    <property type="match status" value="1"/>
</dbReference>
<dbReference type="InterPro" id="IPR051400">
    <property type="entry name" value="HAD-like_hydrolase"/>
</dbReference>
<dbReference type="InterPro" id="IPR036412">
    <property type="entry name" value="HAD-like_sf"/>
</dbReference>
<dbReference type="InterPro" id="IPR006439">
    <property type="entry name" value="HAD-SF_hydro_IA"/>
</dbReference>
<dbReference type="InterPro" id="IPR011950">
    <property type="entry name" value="HAD-SF_hydro_IA_CTE7"/>
</dbReference>
<dbReference type="InterPro" id="IPR006549">
    <property type="entry name" value="HAD-SF_hydro_IIIA"/>
</dbReference>
<dbReference type="InterPro" id="IPR023214">
    <property type="entry name" value="HAD_sf"/>
</dbReference>
<dbReference type="NCBIfam" id="TIGR02253">
    <property type="entry name" value="CTE7"/>
    <property type="match status" value="1"/>
</dbReference>
<dbReference type="NCBIfam" id="TIGR01549">
    <property type="entry name" value="HAD-SF-IA-v1"/>
    <property type="match status" value="1"/>
</dbReference>
<dbReference type="NCBIfam" id="TIGR01509">
    <property type="entry name" value="HAD-SF-IA-v3"/>
    <property type="match status" value="1"/>
</dbReference>
<dbReference type="NCBIfam" id="TIGR01662">
    <property type="entry name" value="HAD-SF-IIIA"/>
    <property type="match status" value="1"/>
</dbReference>
<dbReference type="PANTHER" id="PTHR46470:SF2">
    <property type="entry name" value="GLYCERALDEHYDE 3-PHOSPHATE PHOSPHATASE"/>
    <property type="match status" value="1"/>
</dbReference>
<dbReference type="PANTHER" id="PTHR46470">
    <property type="entry name" value="N-ACYLNEURAMINATE-9-PHOSPHATASE"/>
    <property type="match status" value="1"/>
</dbReference>
<dbReference type="Pfam" id="PF00702">
    <property type="entry name" value="Hydrolase"/>
    <property type="match status" value="1"/>
</dbReference>
<dbReference type="PRINTS" id="PR00413">
    <property type="entry name" value="HADHALOGNASE"/>
</dbReference>
<dbReference type="SFLD" id="SFLDG01135">
    <property type="entry name" value="C1.5.6:_HAD__Beta-PGM__Phospha"/>
    <property type="match status" value="1"/>
</dbReference>
<dbReference type="SFLD" id="SFLDG01129">
    <property type="entry name" value="C1.5:_HAD__Beta-PGM__Phosphata"/>
    <property type="match status" value="1"/>
</dbReference>
<dbReference type="SUPFAM" id="SSF56784">
    <property type="entry name" value="HAD-like"/>
    <property type="match status" value="1"/>
</dbReference>
<sequence>MRRIKVIFFDLDDTLVDTSKLAEVARKNAIENMIRHGMPVDFDTAYNELLELIKEYGSNFPYHFDYLLRRLDLEYNPKWVAAGVIAYHNTKFTYLREVPGARKTLLRLKKEGYMTGIITDGNPIKQWEKILRLELDDFFEHVMISDFEGVKKPHPKIFKKALKAFNVKPEEAIMVGDRLYSDIYGAKNVGMKTVWFKYGKYAELDLEYKEYADYVITELPQLLEVLERENGSDKEVHSSG</sequence>
<proteinExistence type="inferred from homology"/>
<gene>
    <name type="ordered locus">PF1777</name>
</gene>
<comment type="function">
    <text evidence="1">Catalyzes the dephosphorylation of D,L-glyceraldehyde 3-phosphate in vitro.</text>
</comment>
<comment type="cofactor">
    <cofactor evidence="1">
        <name>Mg(2+)</name>
        <dbReference type="ChEBI" id="CHEBI:18420"/>
    </cofactor>
</comment>
<comment type="similarity">
    <text evidence="2">Belongs to the HAD-like hydrolase superfamily.</text>
</comment>
<protein>
    <recommendedName>
        <fullName evidence="1">Glyceraldehyde 3-phosphate phosphatase</fullName>
        <ecNumber evidence="1">3.1.3.-</ecNumber>
    </recommendedName>
</protein>
<feature type="chain" id="PRO_0000107333" description="Glyceraldehyde 3-phosphate phosphatase">
    <location>
        <begin position="1"/>
        <end position="240"/>
    </location>
</feature>
<evidence type="ECO:0000250" key="1">
    <source>
        <dbReference type="UniProtKB" id="Q58832"/>
    </source>
</evidence>
<evidence type="ECO:0000305" key="2"/>
<name>G3PP_PYRFU</name>
<reference key="1">
    <citation type="journal article" date="1999" name="Genetics">
        <title>Divergence of the hyperthermophilic archaea Pyrococcus furiosus and P. horikoshii inferred from complete genomic sequences.</title>
        <authorList>
            <person name="Maeder D.L."/>
            <person name="Weiss R.B."/>
            <person name="Dunn D.M."/>
            <person name="Cherry J.L."/>
            <person name="Gonzalez J.M."/>
            <person name="DiRuggiero J."/>
            <person name="Robb F.T."/>
        </authorList>
    </citation>
    <scope>NUCLEOTIDE SEQUENCE [LARGE SCALE GENOMIC DNA]</scope>
    <source>
        <strain>ATCC 43587 / DSM 3638 / JCM 8422 / Vc1</strain>
    </source>
</reference>
<accession>Q8U040</accession>
<keyword id="KW-0378">Hydrolase</keyword>
<keyword id="KW-0460">Magnesium</keyword>
<keyword id="KW-0479">Metal-binding</keyword>
<keyword id="KW-1185">Reference proteome</keyword>
<organism>
    <name type="scientific">Pyrococcus furiosus (strain ATCC 43587 / DSM 3638 / JCM 8422 / Vc1)</name>
    <dbReference type="NCBI Taxonomy" id="186497"/>
    <lineage>
        <taxon>Archaea</taxon>
        <taxon>Methanobacteriati</taxon>
        <taxon>Methanobacteriota</taxon>
        <taxon>Thermococci</taxon>
        <taxon>Thermococcales</taxon>
        <taxon>Thermococcaceae</taxon>
        <taxon>Pyrococcus</taxon>
    </lineage>
</organism>